<dbReference type="EC" id="1.14.19.44" evidence="6 7"/>
<dbReference type="EMBL" id="AK027427">
    <property type="protein sequence ID" value="BAB55103.1"/>
    <property type="molecule type" value="mRNA"/>
</dbReference>
<dbReference type="EMBL" id="AK027522">
    <property type="protein sequence ID" value="BAB55173.1"/>
    <property type="molecule type" value="mRNA"/>
</dbReference>
<dbReference type="EMBL" id="AK074754">
    <property type="protein sequence ID" value="BAC11182.1"/>
    <property type="status" value="ALT_INIT"/>
    <property type="molecule type" value="mRNA"/>
</dbReference>
<dbReference type="EMBL" id="AK074819">
    <property type="protein sequence ID" value="BAC11229.1"/>
    <property type="status" value="ALT_INIT"/>
    <property type="molecule type" value="mRNA"/>
</dbReference>
<dbReference type="EMBL" id="AK096275">
    <property type="protein sequence ID" value="BAG53244.1"/>
    <property type="molecule type" value="mRNA"/>
</dbReference>
<dbReference type="EMBL" id="AK289552">
    <property type="protein sequence ID" value="BAF82241.1"/>
    <property type="molecule type" value="mRNA"/>
</dbReference>
<dbReference type="EMBL" id="AK314199">
    <property type="protein sequence ID" value="BAG36877.1"/>
    <property type="molecule type" value="mRNA"/>
</dbReference>
<dbReference type="EMBL" id="AC004770">
    <property type="protein sequence ID" value="AAC23397.1"/>
    <property type="molecule type" value="Genomic_DNA"/>
</dbReference>
<dbReference type="EMBL" id="AP002380">
    <property type="status" value="NOT_ANNOTATED_CDS"/>
    <property type="molecule type" value="Genomic_DNA"/>
</dbReference>
<dbReference type="EMBL" id="AF084558">
    <property type="protein sequence ID" value="AAG23120.1"/>
    <property type="molecule type" value="mRNA"/>
</dbReference>
<dbReference type="EMBL" id="AL512760">
    <property type="protein sequence ID" value="CAC21679.1"/>
    <property type="molecule type" value="mRNA"/>
</dbReference>
<dbReference type="EMBL" id="AL834479">
    <property type="protein sequence ID" value="CAD39138.1"/>
    <property type="molecule type" value="mRNA"/>
</dbReference>
<dbReference type="EMBL" id="AK222906">
    <property type="protein sequence ID" value="BAD96626.1"/>
    <property type="molecule type" value="mRNA"/>
</dbReference>
<dbReference type="EMBL" id="BC007846">
    <property type="protein sequence ID" value="AAH07846.1"/>
    <property type="molecule type" value="mRNA"/>
</dbReference>
<dbReference type="EMBL" id="AF199596">
    <property type="protein sequence ID" value="AAF29378.1"/>
    <property type="molecule type" value="mRNA"/>
</dbReference>
<dbReference type="EMBL" id="AF226273">
    <property type="protein sequence ID" value="AAF70457.1"/>
    <property type="molecule type" value="mRNA"/>
</dbReference>
<dbReference type="RefSeq" id="NP_037534.3">
    <property type="nucleotide sequence ID" value="NM_013402.4"/>
</dbReference>
<dbReference type="RefSeq" id="XP_047282891.1">
    <molecule id="O60427-2"/>
    <property type="nucleotide sequence ID" value="XM_047426935.1"/>
</dbReference>
<dbReference type="RefSeq" id="XP_054224724.1">
    <molecule id="O60427-2"/>
    <property type="nucleotide sequence ID" value="XM_054368749.1"/>
</dbReference>
<dbReference type="SMR" id="O60427"/>
<dbReference type="BioGRID" id="110180">
    <property type="interactions" value="94"/>
</dbReference>
<dbReference type="FunCoup" id="O60427">
    <property type="interactions" value="1320"/>
</dbReference>
<dbReference type="IntAct" id="O60427">
    <property type="interactions" value="63"/>
</dbReference>
<dbReference type="MINT" id="O60427"/>
<dbReference type="STRING" id="9606.ENSP00000322229"/>
<dbReference type="BindingDB" id="O60427"/>
<dbReference type="ChEMBL" id="CHEMBL5840"/>
<dbReference type="DrugBank" id="DB00132">
    <property type="generic name" value="alpha-Linolenic acid"/>
</dbReference>
<dbReference type="DrugBank" id="DB11358">
    <property type="generic name" value="Evening primrose oil"/>
</dbReference>
<dbReference type="DrugBank" id="DB00159">
    <property type="generic name" value="Icosapent"/>
</dbReference>
<dbReference type="DrugBank" id="DB13168">
    <property type="generic name" value="Omega-6 fatty acids"/>
</dbReference>
<dbReference type="DrugBank" id="DB09328">
    <property type="generic name" value="Vayarin"/>
</dbReference>
<dbReference type="SwissLipids" id="SLP:000000368"/>
<dbReference type="GlyGen" id="O60427">
    <property type="glycosylation" value="2 sites, 1 O-linked glycan (1 site)"/>
</dbReference>
<dbReference type="iPTMnet" id="O60427"/>
<dbReference type="PhosphoSitePlus" id="O60427"/>
<dbReference type="SwissPalm" id="O60427"/>
<dbReference type="BioMuta" id="FADS1"/>
<dbReference type="jPOST" id="O60427"/>
<dbReference type="MassIVE" id="O60427"/>
<dbReference type="PaxDb" id="9606-ENSP00000322229"/>
<dbReference type="PeptideAtlas" id="O60427"/>
<dbReference type="ProteomicsDB" id="1836"/>
<dbReference type="ProteomicsDB" id="49399">
    <molecule id="O60427-1"/>
</dbReference>
<dbReference type="Pumba" id="O60427"/>
<dbReference type="Antibodypedia" id="21596">
    <property type="antibodies" value="277 antibodies from 36 providers"/>
</dbReference>
<dbReference type="DNASU" id="3992"/>
<dbReference type="Ensembl" id="ENST00000433932.5">
    <molecule id="O60427-2"/>
    <property type="protein sequence ID" value="ENSP00000405087.1"/>
    <property type="gene ID" value="ENSG00000149485.19"/>
</dbReference>
<dbReference type="Ensembl" id="ENST00000542506.5">
    <molecule id="O60427-2"/>
    <property type="protein sequence ID" value="ENSP00000441403.1"/>
    <property type="gene ID" value="ENSG00000149485.19"/>
</dbReference>
<dbReference type="GeneID" id="3992"/>
<dbReference type="KEGG" id="hsa:3992"/>
<dbReference type="UCSC" id="uc010rln.2">
    <molecule id="O60427-1"/>
    <property type="organism name" value="human"/>
</dbReference>
<dbReference type="AGR" id="HGNC:3574"/>
<dbReference type="CTD" id="3992"/>
<dbReference type="DisGeNET" id="3992"/>
<dbReference type="GeneCards" id="FADS1"/>
<dbReference type="HGNC" id="HGNC:3574">
    <property type="gene designation" value="FADS1"/>
</dbReference>
<dbReference type="HPA" id="ENSG00000149485">
    <property type="expression patterns" value="Low tissue specificity"/>
</dbReference>
<dbReference type="MIM" id="606148">
    <property type="type" value="gene"/>
</dbReference>
<dbReference type="neXtProt" id="NX_O60427"/>
<dbReference type="OpenTargets" id="ENSG00000149485"/>
<dbReference type="PharmGKB" id="PA27973"/>
<dbReference type="VEuPathDB" id="HostDB:ENSG00000149485"/>
<dbReference type="eggNOG" id="KOG4232">
    <property type="taxonomic scope" value="Eukaryota"/>
</dbReference>
<dbReference type="GeneTree" id="ENSGT00950000182990"/>
<dbReference type="HOGENOM" id="CLU_016265_0_0_1"/>
<dbReference type="InParanoid" id="O60427"/>
<dbReference type="OMA" id="LYNCNYF"/>
<dbReference type="OrthoDB" id="260091at2759"/>
<dbReference type="PAN-GO" id="O60427">
    <property type="GO annotations" value="2 GO annotations based on evolutionary models"/>
</dbReference>
<dbReference type="PhylomeDB" id="O60427"/>
<dbReference type="TreeFam" id="TF313604"/>
<dbReference type="BioCyc" id="MetaCyc:HS07617-MONOMER"/>
<dbReference type="BRENDA" id="1.14.19.30">
    <property type="organism ID" value="2681"/>
</dbReference>
<dbReference type="PathwayCommons" id="O60427"/>
<dbReference type="Reactome" id="R-HSA-1989781">
    <property type="pathway name" value="PPARA activates gene expression"/>
</dbReference>
<dbReference type="Reactome" id="R-HSA-2046105">
    <property type="pathway name" value="Linoleic acid (LA) metabolism"/>
</dbReference>
<dbReference type="Reactome" id="R-HSA-2046106">
    <property type="pathway name" value="alpha-linolenic acid (ALA) metabolism"/>
</dbReference>
<dbReference type="SignaLink" id="O60427"/>
<dbReference type="SIGNOR" id="O60427"/>
<dbReference type="UniPathway" id="UPA00658"/>
<dbReference type="BioGRID-ORCS" id="3992">
    <property type="hits" value="20 hits in 1169 CRISPR screens"/>
</dbReference>
<dbReference type="ChiTaRS" id="FADS1">
    <property type="organism name" value="human"/>
</dbReference>
<dbReference type="GeneWiki" id="FADS1"/>
<dbReference type="GenomeRNAi" id="3992"/>
<dbReference type="Pharos" id="O60427">
    <property type="development level" value="Tchem"/>
</dbReference>
<dbReference type="PRO" id="PR:O60427"/>
<dbReference type="Proteomes" id="UP000005640">
    <property type="component" value="Chromosome 11"/>
</dbReference>
<dbReference type="RNAct" id="O60427">
    <property type="molecule type" value="protein"/>
</dbReference>
<dbReference type="Bgee" id="ENSG00000149485">
    <property type="expression patterns" value="Expressed in upper leg skin and 205 other cell types or tissues"/>
</dbReference>
<dbReference type="ExpressionAtlas" id="O60427">
    <property type="expression patterns" value="baseline and differential"/>
</dbReference>
<dbReference type="GO" id="GO:0005789">
    <property type="term" value="C:endoplasmic reticulum membrane"/>
    <property type="evidence" value="ECO:0000250"/>
    <property type="project" value="UniProtKB"/>
</dbReference>
<dbReference type="GO" id="GO:0043231">
    <property type="term" value="C:intracellular membrane-bounded organelle"/>
    <property type="evidence" value="ECO:0000303"/>
    <property type="project" value="UniProtKB"/>
</dbReference>
<dbReference type="GO" id="GO:0016020">
    <property type="term" value="C:membrane"/>
    <property type="evidence" value="ECO:0007005"/>
    <property type="project" value="UniProtKB"/>
</dbReference>
<dbReference type="GO" id="GO:0005739">
    <property type="term" value="C:mitochondrion"/>
    <property type="evidence" value="ECO:0000250"/>
    <property type="project" value="UniProtKB"/>
</dbReference>
<dbReference type="GO" id="GO:0062076">
    <property type="term" value="F:acyl-CoA (8-3)-desaturase activity"/>
    <property type="evidence" value="ECO:0000314"/>
    <property type="project" value="UniProtKB"/>
</dbReference>
<dbReference type="GO" id="GO:0016213">
    <property type="term" value="F:acyl-CoA 6-desaturase activity"/>
    <property type="evidence" value="ECO:0000314"/>
    <property type="project" value="MGI"/>
</dbReference>
<dbReference type="GO" id="GO:0000248">
    <property type="term" value="F:C-5 sterol desaturase activity"/>
    <property type="evidence" value="ECO:0000304"/>
    <property type="project" value="ProtInc"/>
</dbReference>
<dbReference type="GO" id="GO:0045485">
    <property type="term" value="F:omega-6 fatty acid desaturase activity"/>
    <property type="evidence" value="ECO:0000304"/>
    <property type="project" value="Reactome"/>
</dbReference>
<dbReference type="GO" id="GO:0016491">
    <property type="term" value="F:oxidoreductase activity"/>
    <property type="evidence" value="ECO:0000314"/>
    <property type="project" value="UniProtKB"/>
</dbReference>
<dbReference type="GO" id="GO:0016717">
    <property type="term" value="F:oxidoreductase activity, acting on paired donors, with oxidation of a pair of donors resulting in the reduction of molecular oxygen to two molecules of water"/>
    <property type="evidence" value="ECO:0000318"/>
    <property type="project" value="GO_Central"/>
</dbReference>
<dbReference type="GO" id="GO:0036109">
    <property type="term" value="P:alpha-linolenic acid metabolic process"/>
    <property type="evidence" value="ECO:0000304"/>
    <property type="project" value="Reactome"/>
</dbReference>
<dbReference type="GO" id="GO:0007267">
    <property type="term" value="P:cell-cell signaling"/>
    <property type="evidence" value="ECO:0000303"/>
    <property type="project" value="UniProtKB"/>
</dbReference>
<dbReference type="GO" id="GO:0009267">
    <property type="term" value="P:cellular response to starvation"/>
    <property type="evidence" value="ECO:0000314"/>
    <property type="project" value="UniProtKB"/>
</dbReference>
<dbReference type="GO" id="GO:0046456">
    <property type="term" value="P:icosanoid biosynthetic process"/>
    <property type="evidence" value="ECO:0000304"/>
    <property type="project" value="UniProtKB"/>
</dbReference>
<dbReference type="GO" id="GO:0043651">
    <property type="term" value="P:linoleic acid metabolic process"/>
    <property type="evidence" value="ECO:0000304"/>
    <property type="project" value="Reactome"/>
</dbReference>
<dbReference type="GO" id="GO:0006629">
    <property type="term" value="P:lipid metabolic process"/>
    <property type="evidence" value="ECO:0000318"/>
    <property type="project" value="GO_Central"/>
</dbReference>
<dbReference type="GO" id="GO:0042759">
    <property type="term" value="P:long-chain fatty acid biosynthetic process"/>
    <property type="evidence" value="ECO:0000314"/>
    <property type="project" value="MGI"/>
</dbReference>
<dbReference type="GO" id="GO:0008654">
    <property type="term" value="P:phospholipid biosynthetic process"/>
    <property type="evidence" value="ECO:0000304"/>
    <property type="project" value="UniProtKB"/>
</dbReference>
<dbReference type="GO" id="GO:0045595">
    <property type="term" value="P:regulation of cell differentiation"/>
    <property type="evidence" value="ECO:0000303"/>
    <property type="project" value="UniProtKB"/>
</dbReference>
<dbReference type="GO" id="GO:0006355">
    <property type="term" value="P:regulation of DNA-templated transcription"/>
    <property type="evidence" value="ECO:0000303"/>
    <property type="project" value="UniProtKB"/>
</dbReference>
<dbReference type="GO" id="GO:0006636">
    <property type="term" value="P:unsaturated fatty acid biosynthetic process"/>
    <property type="evidence" value="ECO:0000314"/>
    <property type="project" value="UniProtKB"/>
</dbReference>
<dbReference type="CDD" id="cd03506">
    <property type="entry name" value="Delta6-FADS-like"/>
    <property type="match status" value="1"/>
</dbReference>
<dbReference type="FunFam" id="3.10.120.10:FF:000017">
    <property type="entry name" value="Fatty acid desaturase 1"/>
    <property type="match status" value="1"/>
</dbReference>
<dbReference type="Gene3D" id="3.10.120.10">
    <property type="entry name" value="Cytochrome b5-like heme/steroid binding domain"/>
    <property type="match status" value="1"/>
</dbReference>
<dbReference type="InterPro" id="IPR001199">
    <property type="entry name" value="Cyt_B5-like_heme/steroid-bd"/>
</dbReference>
<dbReference type="InterPro" id="IPR036400">
    <property type="entry name" value="Cyt_B5-like_heme/steroid_sf"/>
</dbReference>
<dbReference type="InterPro" id="IPR005804">
    <property type="entry name" value="FA_desaturase_dom"/>
</dbReference>
<dbReference type="InterPro" id="IPR012171">
    <property type="entry name" value="Fatty_acid_desaturase"/>
</dbReference>
<dbReference type="PANTHER" id="PTHR19353:SF57">
    <property type="entry name" value="ACYL-COA (8-3)-DESATURASE"/>
    <property type="match status" value="1"/>
</dbReference>
<dbReference type="PANTHER" id="PTHR19353">
    <property type="entry name" value="FATTY ACID DESATURASE 2"/>
    <property type="match status" value="1"/>
</dbReference>
<dbReference type="Pfam" id="PF00173">
    <property type="entry name" value="Cyt-b5"/>
    <property type="match status" value="1"/>
</dbReference>
<dbReference type="Pfam" id="PF00487">
    <property type="entry name" value="FA_desaturase"/>
    <property type="match status" value="1"/>
</dbReference>
<dbReference type="PIRSF" id="PIRSF015921">
    <property type="entry name" value="FA_sphinglp_des"/>
    <property type="match status" value="1"/>
</dbReference>
<dbReference type="PRINTS" id="PR00363">
    <property type="entry name" value="CYTOCHROMEB5"/>
</dbReference>
<dbReference type="SMART" id="SM01117">
    <property type="entry name" value="Cyt-b5"/>
    <property type="match status" value="1"/>
</dbReference>
<dbReference type="SUPFAM" id="SSF55856">
    <property type="entry name" value="Cytochrome b5-like heme/steroid binding domain"/>
    <property type="match status" value="1"/>
</dbReference>
<dbReference type="PROSITE" id="PS50255">
    <property type="entry name" value="CYTOCHROME_B5_2"/>
    <property type="match status" value="1"/>
</dbReference>
<comment type="function">
    <molecule>Isoform 1</molecule>
    <text evidence="2 3 6 7">Acts as a front-end fatty acyl-coenzyme A (CoA) desaturase that introduces a cis double bond at carbon 5 located between a preexisting double bond and the carboxyl end of the fatty acyl chain. Involved in biosynthesis of highly unsaturated fatty acids (HUFA) from the essential polyunsaturated fatty acids (PUFA) linoleic acid (LA) (18:2n-6) and alpha-linolenic acid (ALA) (18:3n-3) precursors. Specifically, desaturates dihomo-gamma-linoleoate (DGLA) (20:3n-6) and eicosatetraenoate (ETA) (20:4n-3) to generate arachidonate (AA) (20:4n-6) and eicosapentaenoate (EPA) (20:5n-3), respectively (PubMed:10601301, PubMed:10769175). As a rate limiting enzyme for DGLA (20:3n-6) and AA (20:4n-6)-derived eicosanoid biosynthesis, controls the metabolism of inflammatory lipids like prostaglandin E2, critical for efficient acute inflammatory response and maintenance of epithelium homeostasis. Contributes to membrane phospholipid biosynthesis by providing AA (20:4n-6) as a major acyl chain esterified into phospholipids. In particular, regulates phosphatidylinositol-4,5-bisphosphate levels, modulating inflammatory cytokine production in T-cells (By similarity). Also desaturates (11E)-octadecenoate (trans-vaccenoate)(18:1n-9), a metabolite in the biohydrogenation pathway of LA (18:2n-6) (By similarity).</text>
</comment>
<comment type="function">
    <molecule>Isoform 2</molecule>
    <text evidence="1">Does not exhibit any catalytic activity toward 20:3n-6, but it may enhance FADS2 activity.</text>
</comment>
<comment type="catalytic activity">
    <reaction evidence="6 7">
        <text>(8Z,11Z,14Z)-eicosatrienoyl-CoA + 2 Fe(II)-[cytochrome b5] + O2 + 2 H(+) = (5Z,8Z,11Z,14Z)-eicosatetraenoyl-CoA + 2 Fe(III)-[cytochrome b5] + 2 H2O</text>
        <dbReference type="Rhea" id="RHEA:46424"/>
        <dbReference type="Rhea" id="RHEA-COMP:10438"/>
        <dbReference type="Rhea" id="RHEA-COMP:10439"/>
        <dbReference type="ChEBI" id="CHEBI:15377"/>
        <dbReference type="ChEBI" id="CHEBI:15378"/>
        <dbReference type="ChEBI" id="CHEBI:15379"/>
        <dbReference type="ChEBI" id="CHEBI:29033"/>
        <dbReference type="ChEBI" id="CHEBI:29034"/>
        <dbReference type="ChEBI" id="CHEBI:57368"/>
        <dbReference type="ChEBI" id="CHEBI:74264"/>
        <dbReference type="EC" id="1.14.19.44"/>
    </reaction>
    <physiologicalReaction direction="left-to-right" evidence="17">
        <dbReference type="Rhea" id="RHEA:46425"/>
    </physiologicalReaction>
</comment>
<comment type="catalytic activity">
    <reaction evidence="7">
        <text>(8Z,11Z,14Z,17Z)-eicosatetraenoyl-CoA + 2 Fe(II)-[cytochrome b5] + O2 + 2 H(+) = (5Z,8Z,11Z,14Z,17Z)-eicosapentaenoyl-CoA + 2 Fe(III)-[cytochrome b5] + 2 H2O</text>
        <dbReference type="Rhea" id="RHEA:46420"/>
        <dbReference type="Rhea" id="RHEA-COMP:10438"/>
        <dbReference type="Rhea" id="RHEA-COMP:10439"/>
        <dbReference type="ChEBI" id="CHEBI:15377"/>
        <dbReference type="ChEBI" id="CHEBI:15378"/>
        <dbReference type="ChEBI" id="CHEBI:15379"/>
        <dbReference type="ChEBI" id="CHEBI:29033"/>
        <dbReference type="ChEBI" id="CHEBI:29034"/>
        <dbReference type="ChEBI" id="CHEBI:73862"/>
        <dbReference type="ChEBI" id="CHEBI:74265"/>
        <dbReference type="EC" id="1.14.19.44"/>
    </reaction>
    <physiologicalReaction direction="left-to-right" evidence="18">
        <dbReference type="Rhea" id="RHEA:46421"/>
    </physiologicalReaction>
</comment>
<comment type="catalytic activity">
    <reaction evidence="3">
        <text>(11E)-octadecenoyl-CoA + 2 Fe(II)-[cytochrome b5] + O2 + 2 H(+) = (5Z,11E)-octadecadienoyl-CoA + 2 Fe(III)-[cytochrome b5] + 2 H2O</text>
        <dbReference type="Rhea" id="RHEA:46060"/>
        <dbReference type="Rhea" id="RHEA-COMP:10438"/>
        <dbReference type="Rhea" id="RHEA-COMP:10439"/>
        <dbReference type="ChEBI" id="CHEBI:15377"/>
        <dbReference type="ChEBI" id="CHEBI:15378"/>
        <dbReference type="ChEBI" id="CHEBI:15379"/>
        <dbReference type="ChEBI" id="CHEBI:29033"/>
        <dbReference type="ChEBI" id="CHEBI:29034"/>
        <dbReference type="ChEBI" id="CHEBI:74296"/>
        <dbReference type="ChEBI" id="CHEBI:85651"/>
    </reaction>
    <physiologicalReaction direction="left-to-right" evidence="3">
        <dbReference type="Rhea" id="RHEA:46061"/>
    </physiologicalReaction>
</comment>
<comment type="pathway">
    <text>Lipid metabolism; polyunsaturated fatty acid biosynthesis.</text>
</comment>
<comment type="subcellular location">
    <molecule>Isoform 1</molecule>
    <subcellularLocation>
        <location evidence="1">Endoplasmic reticulum membrane</location>
        <topology evidence="1">Multi-pass membrane protein</topology>
    </subcellularLocation>
    <subcellularLocation>
        <location evidence="10">Mitochondrion</location>
    </subcellularLocation>
</comment>
<comment type="subcellular location">
    <molecule>Isoform 2</molecule>
    <subcellularLocation>
        <location evidence="1">Endoplasmic reticulum membrane</location>
        <topology evidence="1">Multi-pass membrane protein</topology>
    </subcellularLocation>
</comment>
<comment type="alternative products">
    <event type="alternative splicing"/>
    <isoform>
        <id>O60427-1</id>
        <name>1</name>
        <name>FADS1CS</name>
        <sequence type="displayed"/>
    </isoform>
    <isoform>
        <id>O60427-2</id>
        <name>2</name>
        <name>FADS1AT1</name>
        <sequence type="described" ref="VSP_047521"/>
    </isoform>
</comment>
<comment type="tissue specificity">
    <text evidence="6 7 8">Widely expressed, with highest levels in liver, brain, adrenal gland and heart. Highly expressed in fetal liver and brain.</text>
</comment>
<comment type="induction">
    <text evidence="10">Strongly down-regulated upon differentiation in a neuroblastoma cell line (at protein level).</text>
</comment>
<comment type="domain">
    <text>The histidine box domains may contain the active site and/or be involved in metal ion binding.</text>
</comment>
<comment type="similarity">
    <text evidence="16">Belongs to the fatty acid desaturase type 1 family.</text>
</comment>
<comment type="sequence caution" evidence="16">
    <conflict type="erroneous initiation">
        <sequence resource="EMBL-CDS" id="BAC11182"/>
    </conflict>
    <text>Extended N-terminus.</text>
</comment>
<comment type="sequence caution" evidence="16">
    <conflict type="erroneous initiation">
        <sequence resource="EMBL-CDS" id="BAC11229"/>
    </conflict>
    <text>Extended N-terminus.</text>
</comment>
<accession>O60427</accession>
<accession>A8K0I7</accession>
<accession>B2RAI0</accession>
<accession>Q53GM5</accession>
<accession>Q8N3A6</accession>
<accession>Q8NCC7</accession>
<accession>Q8NCG0</accession>
<accession>Q96I39</accession>
<accession>Q96SV3</accession>
<accession>Q96T10</accession>
<accession>Q9NRP8</accession>
<accession>Q9NYX1</accession>
<gene>
    <name evidence="14 19" type="primary">FADS1</name>
    <name type="synonym">FADSD5</name>
</gene>
<keyword id="KW-0007">Acetylation</keyword>
<keyword id="KW-0025">Alternative splicing</keyword>
<keyword id="KW-0249">Electron transport</keyword>
<keyword id="KW-0256">Endoplasmic reticulum</keyword>
<keyword id="KW-0275">Fatty acid biosynthesis</keyword>
<keyword id="KW-0276">Fatty acid metabolism</keyword>
<keyword id="KW-0444">Lipid biosynthesis</keyword>
<keyword id="KW-0443">Lipid metabolism</keyword>
<keyword id="KW-0472">Membrane</keyword>
<keyword id="KW-0496">Mitochondrion</keyword>
<keyword id="KW-0560">Oxidoreductase</keyword>
<keyword id="KW-1267">Proteomics identification</keyword>
<keyword id="KW-1185">Reference proteome</keyword>
<keyword id="KW-0812">Transmembrane</keyword>
<keyword id="KW-1133">Transmembrane helix</keyword>
<keyword id="KW-0813">Transport</keyword>
<organism>
    <name type="scientific">Homo sapiens</name>
    <name type="common">Human</name>
    <dbReference type="NCBI Taxonomy" id="9606"/>
    <lineage>
        <taxon>Eukaryota</taxon>
        <taxon>Metazoa</taxon>
        <taxon>Chordata</taxon>
        <taxon>Craniata</taxon>
        <taxon>Vertebrata</taxon>
        <taxon>Euteleostomi</taxon>
        <taxon>Mammalia</taxon>
        <taxon>Eutheria</taxon>
        <taxon>Euarchontoglires</taxon>
        <taxon>Primates</taxon>
        <taxon>Haplorrhini</taxon>
        <taxon>Catarrhini</taxon>
        <taxon>Hominidae</taxon>
        <taxon>Homo</taxon>
    </lineage>
</organism>
<evidence type="ECO:0000250" key="1">
    <source>
        <dbReference type="UniProtKB" id="A4UVI1"/>
    </source>
</evidence>
<evidence type="ECO:0000250" key="2">
    <source>
        <dbReference type="UniProtKB" id="Q920L1"/>
    </source>
</evidence>
<evidence type="ECO:0000250" key="3">
    <source>
        <dbReference type="UniProtKB" id="Q920R3"/>
    </source>
</evidence>
<evidence type="ECO:0000255" key="4"/>
<evidence type="ECO:0000255" key="5">
    <source>
        <dbReference type="PROSITE-ProRule" id="PRU00279"/>
    </source>
</evidence>
<evidence type="ECO:0000269" key="6">
    <source>
    </source>
</evidence>
<evidence type="ECO:0000269" key="7">
    <source>
    </source>
</evidence>
<evidence type="ECO:0000269" key="8">
    <source>
    </source>
</evidence>
<evidence type="ECO:0000269" key="9">
    <source>
    </source>
</evidence>
<evidence type="ECO:0000269" key="10">
    <source>
    </source>
</evidence>
<evidence type="ECO:0000269" key="11">
    <source>
    </source>
</evidence>
<evidence type="ECO:0000303" key="12">
    <source>
    </source>
</evidence>
<evidence type="ECO:0000303" key="13">
    <source>
    </source>
</evidence>
<evidence type="ECO:0000303" key="14">
    <source>
    </source>
</evidence>
<evidence type="ECO:0000303" key="15">
    <source>
    </source>
</evidence>
<evidence type="ECO:0000305" key="16"/>
<evidence type="ECO:0000305" key="17">
    <source>
    </source>
</evidence>
<evidence type="ECO:0000305" key="18">
    <source>
    </source>
</evidence>
<evidence type="ECO:0000312" key="19">
    <source>
        <dbReference type="HGNC" id="HGNC:3574"/>
    </source>
</evidence>
<evidence type="ECO:0007744" key="20">
    <source>
    </source>
</evidence>
<name>FADS1_HUMAN</name>
<sequence length="444" mass="51964">MAPDPVAAETAAQGPTPRYFTWDEVAQRSGCEERWLVIDRKVYNISEFTRRHPGGSRVISHYAGQDATDPFVAFHINKGLVKKYMNSLLIGELSPEQPSFEPTKNKELTDEFRELRATVERMGLMKANHVFFLLYLLHILLLDGAAWLTLWVFGTSFLPFLLCAVLLSAVQAQAGWLQHDFGHLSVFSTSKWNHLLHHFVIGHLKGAPASWWNHMHFQHHAKPNCFRKDPDINMHPFFFALGKILSVELGKQKKKYMPYNHQHKYFFLIGPPALLPLYFQWYIFYFVIQRKKWVDLAWMITFYVRFFLTYVPLLGLKAFLGLFFIVRFLESNWFVWVTQMNHIPMHIDHDRNMDWVSTQLQATCNVHKSAFNDWFSGHLNFQIEHHLFPTMPRHNYHKVAPLVQSLCAKHGIEYQSKPLLSAFADIIHSLKESGQLWLDAYLHQ</sequence>
<proteinExistence type="evidence at protein level"/>
<feature type="chain" id="PRO_0000307096" description="Acyl-CoA (8-3)-desaturase">
    <location>
        <begin position="1"/>
        <end position="444"/>
    </location>
</feature>
<feature type="topological domain" description="Cytoplasmic" evidence="4">
    <location>
        <begin position="1"/>
        <end position="121"/>
    </location>
</feature>
<feature type="transmembrane region" description="Helical" evidence="4">
    <location>
        <begin position="122"/>
        <end position="142"/>
    </location>
</feature>
<feature type="topological domain" description="Lumenal" evidence="4">
    <location>
        <begin position="143"/>
        <end position="145"/>
    </location>
</feature>
<feature type="transmembrane region" description="Helical" evidence="4">
    <location>
        <begin position="146"/>
        <end position="170"/>
    </location>
</feature>
<feature type="topological domain" description="Cytoplasmic" evidence="4">
    <location>
        <begin position="171"/>
        <end position="267"/>
    </location>
</feature>
<feature type="transmembrane region" description="Helical" evidence="4">
    <location>
        <begin position="268"/>
        <end position="288"/>
    </location>
</feature>
<feature type="topological domain" description="Lumenal" evidence="4">
    <location>
        <begin position="289"/>
        <end position="305"/>
    </location>
</feature>
<feature type="transmembrane region" description="Helical" evidence="4">
    <location>
        <begin position="306"/>
        <end position="326"/>
    </location>
</feature>
<feature type="topological domain" description="Cytoplasmic" evidence="4">
    <location>
        <begin position="327"/>
        <end position="444"/>
    </location>
</feature>
<feature type="domain" description="Cytochrome b5 heme-binding" evidence="5">
    <location>
        <begin position="17"/>
        <end position="94"/>
    </location>
</feature>
<feature type="short sequence motif" description="Histidine box-1">
    <location>
        <begin position="179"/>
        <end position="183"/>
    </location>
</feature>
<feature type="short sequence motif" description="Histidine box-2">
    <location>
        <begin position="216"/>
        <end position="220"/>
    </location>
</feature>
<feature type="short sequence motif" description="Histidine box-3">
    <location>
        <begin position="382"/>
        <end position="386"/>
    </location>
</feature>
<feature type="modified residue" description="N-acetylmethionine" evidence="11 20">
    <location>
        <position position="1"/>
    </location>
</feature>
<feature type="splice variant" id="VSP_047521" description="In isoform 2." evidence="15">
    <location>
        <begin position="1"/>
        <end position="84"/>
    </location>
</feature>
<feature type="sequence variant" id="VAR_035340" description="In dbSNP:rs17856235." evidence="9">
    <original>P</original>
    <variation>S</variation>
    <location>
        <position position="272"/>
    </location>
</feature>
<feature type="sequence conflict" description="In Ref. 7; AAF29378." evidence="16" ref="7">
    <original>V</original>
    <variation>L</variation>
    <location>
        <position position="6"/>
    </location>
</feature>
<feature type="sequence conflict" description="In Ref. 1; BAB55103." evidence="16" ref="1">
    <original>E</original>
    <variation>G</variation>
    <location>
        <position position="9"/>
    </location>
</feature>
<feature type="sequence conflict" description="In Ref. 7; AAF29378." evidence="16" ref="7">
    <original>P</original>
    <variation>L</variation>
    <location>
        <position position="15"/>
    </location>
</feature>
<feature type="sequence conflict" description="In Ref. 1; BAC11182." evidence="16" ref="1">
    <original>F</original>
    <variation>L</variation>
    <location>
        <position position="100"/>
    </location>
</feature>
<feature type="sequence conflict" description="In Ref. 1; BAC11182." evidence="16" ref="1">
    <original>D</original>
    <variation>E</variation>
    <location>
        <position position="143"/>
    </location>
</feature>
<feature type="sequence conflict" description="In Ref. 5; BAD96626." evidence="16" ref="5">
    <original>D</original>
    <variation>G</variation>
    <location>
        <position position="180"/>
    </location>
</feature>
<feature type="sequence conflict" description="In Ref. 1; BAB55173." evidence="16" ref="1">
    <original>W</original>
    <variation>R</variation>
    <location>
        <position position="212"/>
    </location>
</feature>
<feature type="sequence conflict" description="In Ref. 1; BAC11182." evidence="16" ref="1">
    <original>N</original>
    <variation>S</variation>
    <location>
        <position position="213"/>
    </location>
</feature>
<feature type="sequence conflict" description="In Ref. 7; AAF29378." evidence="16" ref="7">
    <original>K</original>
    <variation>N</variation>
    <location>
        <position position="255"/>
    </location>
</feature>
<feature type="sequence conflict" description="In Ref. 1; BAB55103." evidence="16" ref="1">
    <original>F</original>
    <variation>L</variation>
    <location>
        <position position="319"/>
    </location>
</feature>
<feature type="sequence conflict" description="In Ref. 8; AAF70457." evidence="16" ref="8">
    <original>Q</original>
    <variation>L</variation>
    <location>
        <position position="361"/>
    </location>
</feature>
<feature type="sequence conflict" description="In Ref. 1; BAC11229." evidence="16" ref="1">
    <original>F</original>
    <variation>S</variation>
    <location>
        <position position="381"/>
    </location>
</feature>
<feature type="sequence conflict" description="In Ref. 8; AAF70457." evidence="16" ref="8">
    <original>H</original>
    <variation>R</variation>
    <location>
        <position position="410"/>
    </location>
</feature>
<feature type="sequence conflict" description="In Ref. 1; BAC11229." evidence="16" ref="1">
    <original>K</original>
    <variation>E</variation>
    <location>
        <position position="431"/>
    </location>
</feature>
<reference key="1">
    <citation type="journal article" date="1999" name="J. Biol. Chem.">
        <title>Cloning, expression, and fatty acid regulation of the human Delta-5 desaturase.</title>
        <authorList>
            <person name="Cho H.P."/>
            <person name="Nakamura M."/>
            <person name="Clarke S.D."/>
        </authorList>
    </citation>
    <scope>NUCLEOTIDE SEQUENCE [MRNA] (ISOFORM 1)</scope>
    <scope>FUNCTION</scope>
    <scope>TISSUE SPECIFICITY</scope>
    <scope>CATALYTIC ACTIVITY</scope>
</reference>
<reference key="2">
    <citation type="journal article" date="2000" name="Biochem. J.">
        <title>cDNA cloning and characterization of human Delta5-desaturase involved in the biosynthesis of arachidonic acid.</title>
        <authorList>
            <person name="Leonard A.E."/>
            <person name="Kelder B."/>
            <person name="Bobik E.G."/>
            <person name="Chuang L.-T."/>
            <person name="Parker-Barnes J.M."/>
            <person name="Thurmond J.M."/>
            <person name="Kroeger P.E."/>
            <person name="Kopchick J.J."/>
            <person name="Huang Y.-S."/>
            <person name="Mukerji P."/>
        </authorList>
    </citation>
    <scope>NUCLEOTIDE SEQUENCE [MRNA] (ISOFORM 1)</scope>
    <scope>FUNCTION</scope>
    <scope>TISSUE SPECIFICITY</scope>
    <scope>CATALYTIC ACTIVITY</scope>
    <source>
        <tissue>Liver</tissue>
    </source>
</reference>
<reference key="3">
    <citation type="journal article" date="2000" name="Genomics">
        <title>cDNA cloning, genomic structure, and chromosomal localization of three members of the human fatty acid desaturase family.</title>
        <authorList>
            <person name="Marquardt A."/>
            <person name="Stoehr H."/>
            <person name="White K."/>
            <person name="Weber B.H."/>
        </authorList>
    </citation>
    <scope>NUCLEOTIDE SEQUENCE [MRNA] (ISOFORM 1)</scope>
    <scope>TISSUE SPECIFICITY</scope>
    <source>
        <tissue>Retina</tissue>
    </source>
</reference>
<reference key="4">
    <citation type="journal article" date="2004" name="Nat. Genet.">
        <title>Complete sequencing and characterization of 21,243 full-length human cDNAs.</title>
        <authorList>
            <person name="Ota T."/>
            <person name="Suzuki Y."/>
            <person name="Nishikawa T."/>
            <person name="Otsuki T."/>
            <person name="Sugiyama T."/>
            <person name="Irie R."/>
            <person name="Wakamatsu A."/>
            <person name="Hayashi K."/>
            <person name="Sato H."/>
            <person name="Nagai K."/>
            <person name="Kimura K."/>
            <person name="Makita H."/>
            <person name="Sekine M."/>
            <person name="Obayashi M."/>
            <person name="Nishi T."/>
            <person name="Shibahara T."/>
            <person name="Tanaka T."/>
            <person name="Ishii S."/>
            <person name="Yamamoto J."/>
            <person name="Saito K."/>
            <person name="Kawai Y."/>
            <person name="Isono Y."/>
            <person name="Nakamura Y."/>
            <person name="Nagahari K."/>
            <person name="Murakami K."/>
            <person name="Yasuda T."/>
            <person name="Iwayanagi T."/>
            <person name="Wagatsuma M."/>
            <person name="Shiratori A."/>
            <person name="Sudo H."/>
            <person name="Hosoiri T."/>
            <person name="Kaku Y."/>
            <person name="Kodaira H."/>
            <person name="Kondo H."/>
            <person name="Sugawara M."/>
            <person name="Takahashi M."/>
            <person name="Kanda K."/>
            <person name="Yokoi T."/>
            <person name="Furuya T."/>
            <person name="Kikkawa E."/>
            <person name="Omura Y."/>
            <person name="Abe K."/>
            <person name="Kamihara K."/>
            <person name="Katsuta N."/>
            <person name="Sato K."/>
            <person name="Tanikawa M."/>
            <person name="Yamazaki M."/>
            <person name="Ninomiya K."/>
            <person name="Ishibashi T."/>
            <person name="Yamashita H."/>
            <person name="Murakawa K."/>
            <person name="Fujimori K."/>
            <person name="Tanai H."/>
            <person name="Kimata M."/>
            <person name="Watanabe M."/>
            <person name="Hiraoka S."/>
            <person name="Chiba Y."/>
            <person name="Ishida S."/>
            <person name="Ono Y."/>
            <person name="Takiguchi S."/>
            <person name="Watanabe S."/>
            <person name="Yosida M."/>
            <person name="Hotuta T."/>
            <person name="Kusano J."/>
            <person name="Kanehori K."/>
            <person name="Takahashi-Fujii A."/>
            <person name="Hara H."/>
            <person name="Tanase T.-O."/>
            <person name="Nomura Y."/>
            <person name="Togiya S."/>
            <person name="Komai F."/>
            <person name="Hara R."/>
            <person name="Takeuchi K."/>
            <person name="Arita M."/>
            <person name="Imose N."/>
            <person name="Musashino K."/>
            <person name="Yuuki H."/>
            <person name="Oshima A."/>
            <person name="Sasaki N."/>
            <person name="Aotsuka S."/>
            <person name="Yoshikawa Y."/>
            <person name="Matsunawa H."/>
            <person name="Ichihara T."/>
            <person name="Shiohata N."/>
            <person name="Sano S."/>
            <person name="Moriya S."/>
            <person name="Momiyama H."/>
            <person name="Satoh N."/>
            <person name="Takami S."/>
            <person name="Terashima Y."/>
            <person name="Suzuki O."/>
            <person name="Nakagawa S."/>
            <person name="Senoh A."/>
            <person name="Mizoguchi H."/>
            <person name="Goto Y."/>
            <person name="Shimizu F."/>
            <person name="Wakebe H."/>
            <person name="Hishigaki H."/>
            <person name="Watanabe T."/>
            <person name="Sugiyama A."/>
            <person name="Takemoto M."/>
            <person name="Kawakami B."/>
            <person name="Yamazaki M."/>
            <person name="Watanabe K."/>
            <person name="Kumagai A."/>
            <person name="Itakura S."/>
            <person name="Fukuzumi Y."/>
            <person name="Fujimori Y."/>
            <person name="Komiyama M."/>
            <person name="Tashiro H."/>
            <person name="Tanigami A."/>
            <person name="Fujiwara T."/>
            <person name="Ono T."/>
            <person name="Yamada K."/>
            <person name="Fujii Y."/>
            <person name="Ozaki K."/>
            <person name="Hirao M."/>
            <person name="Ohmori Y."/>
            <person name="Kawabata A."/>
            <person name="Hikiji T."/>
            <person name="Kobatake N."/>
            <person name="Inagaki H."/>
            <person name="Ikema Y."/>
            <person name="Okamoto S."/>
            <person name="Okitani R."/>
            <person name="Kawakami T."/>
            <person name="Noguchi S."/>
            <person name="Itoh T."/>
            <person name="Shigeta K."/>
            <person name="Senba T."/>
            <person name="Matsumura K."/>
            <person name="Nakajima Y."/>
            <person name="Mizuno T."/>
            <person name="Morinaga M."/>
            <person name="Sasaki M."/>
            <person name="Togashi T."/>
            <person name="Oyama M."/>
            <person name="Hata H."/>
            <person name="Watanabe M."/>
            <person name="Komatsu T."/>
            <person name="Mizushima-Sugano J."/>
            <person name="Satoh T."/>
            <person name="Shirai Y."/>
            <person name="Takahashi Y."/>
            <person name="Nakagawa K."/>
            <person name="Okumura K."/>
            <person name="Nagase T."/>
            <person name="Nomura N."/>
            <person name="Kikuchi H."/>
            <person name="Masuho Y."/>
            <person name="Yamashita R."/>
            <person name="Nakai K."/>
            <person name="Yada T."/>
            <person name="Nakamura Y."/>
            <person name="Ohara O."/>
            <person name="Isogai T."/>
            <person name="Sugano S."/>
        </authorList>
    </citation>
    <scope>NUCLEOTIDE SEQUENCE [LARGE SCALE MRNA] (ISOFORMS 1 AND 2)</scope>
    <source>
        <tissue>Cerebellum</tissue>
        <tissue>Neuroblastoma</tissue>
        <tissue>Teratocarcinoma</tissue>
    </source>
</reference>
<reference key="5">
    <citation type="journal article" date="2007" name="BMC Genomics">
        <title>The full-ORF clone resource of the German cDNA consortium.</title>
        <authorList>
            <person name="Bechtel S."/>
            <person name="Rosenfelder H."/>
            <person name="Duda A."/>
            <person name="Schmidt C.P."/>
            <person name="Ernst U."/>
            <person name="Wellenreuther R."/>
            <person name="Mehrle A."/>
            <person name="Schuster C."/>
            <person name="Bahr A."/>
            <person name="Bloecker H."/>
            <person name="Heubner D."/>
            <person name="Hoerlein A."/>
            <person name="Michel G."/>
            <person name="Wedler H."/>
            <person name="Koehrer K."/>
            <person name="Ottenwaelder B."/>
            <person name="Poustka A."/>
            <person name="Wiemann S."/>
            <person name="Schupp I."/>
        </authorList>
    </citation>
    <scope>NUCLEOTIDE SEQUENCE [LARGE SCALE MRNA] (ISOFORM 1)</scope>
    <source>
        <tissue>Melanoma</tissue>
    </source>
</reference>
<reference key="6">
    <citation type="submission" date="2005-04" db="EMBL/GenBank/DDBJ databases">
        <authorList>
            <person name="Suzuki Y."/>
            <person name="Sugano S."/>
            <person name="Totoki Y."/>
            <person name="Toyoda A."/>
            <person name="Takeda T."/>
            <person name="Sakaki Y."/>
            <person name="Tanaka A."/>
            <person name="Yokoyama S."/>
        </authorList>
    </citation>
    <scope>NUCLEOTIDE SEQUENCE [LARGE SCALE MRNA] (ISOFORM 1)</scope>
    <source>
        <tissue>Kidney epithelium</tissue>
    </source>
</reference>
<reference key="7">
    <citation type="journal article" date="2006" name="Nature">
        <title>Human chromosome 11 DNA sequence and analysis including novel gene identification.</title>
        <authorList>
            <person name="Taylor T.D."/>
            <person name="Noguchi H."/>
            <person name="Totoki Y."/>
            <person name="Toyoda A."/>
            <person name="Kuroki Y."/>
            <person name="Dewar K."/>
            <person name="Lloyd C."/>
            <person name="Itoh T."/>
            <person name="Takeda T."/>
            <person name="Kim D.-W."/>
            <person name="She X."/>
            <person name="Barlow K.F."/>
            <person name="Bloom T."/>
            <person name="Bruford E."/>
            <person name="Chang J.L."/>
            <person name="Cuomo C.A."/>
            <person name="Eichler E."/>
            <person name="FitzGerald M.G."/>
            <person name="Jaffe D.B."/>
            <person name="LaButti K."/>
            <person name="Nicol R."/>
            <person name="Park H.-S."/>
            <person name="Seaman C."/>
            <person name="Sougnez C."/>
            <person name="Yang X."/>
            <person name="Zimmer A.R."/>
            <person name="Zody M.C."/>
            <person name="Birren B.W."/>
            <person name="Nusbaum C."/>
            <person name="Fujiyama A."/>
            <person name="Hattori M."/>
            <person name="Rogers J."/>
            <person name="Lander E.S."/>
            <person name="Sakaki Y."/>
        </authorList>
    </citation>
    <scope>NUCLEOTIDE SEQUENCE [LARGE SCALE GENOMIC DNA]</scope>
</reference>
<reference key="8">
    <citation type="journal article" date="2004" name="Genome Res.">
        <title>The status, quality, and expansion of the NIH full-length cDNA project: the Mammalian Gene Collection (MGC).</title>
        <authorList>
            <consortium name="The MGC Project Team"/>
        </authorList>
    </citation>
    <scope>NUCLEOTIDE SEQUENCE [LARGE SCALE MRNA] (ISOFORM 1)</scope>
    <scope>VARIANT SER-272</scope>
    <source>
        <tissue>Brain</tissue>
    </source>
</reference>
<reference key="9">
    <citation type="journal article" date="2012" name="J. Lipid Res.">
        <title>A novel FADS1 isoform potentiates FADS2-mediated production of eicosanoid precursor fatty acids.</title>
        <authorList>
            <person name="Park W.J."/>
            <person name="Kothapalli K.S."/>
            <person name="Reardon H.T."/>
            <person name="Lawrence P."/>
            <person name="Qian S.B."/>
            <person name="Brenna J.T."/>
        </authorList>
    </citation>
    <scope>SUBCELLULAR LOCATION (ISOFORM 1)</scope>
    <scope>INDUCTION</scope>
</reference>
<reference key="10">
    <citation type="journal article" date="2012" name="Proc. Natl. Acad. Sci. U.S.A.">
        <title>N-terminal acetylome analyses and functional insights of the N-terminal acetyltransferase NatB.</title>
        <authorList>
            <person name="Van Damme P."/>
            <person name="Lasa M."/>
            <person name="Polevoda B."/>
            <person name="Gazquez C."/>
            <person name="Elosegui-Artola A."/>
            <person name="Kim D.S."/>
            <person name="De Juan-Pardo E."/>
            <person name="Demeyer K."/>
            <person name="Hole K."/>
            <person name="Larrea E."/>
            <person name="Timmerman E."/>
            <person name="Prieto J."/>
            <person name="Arnesen T."/>
            <person name="Sherman F."/>
            <person name="Gevaert K."/>
            <person name="Aldabe R."/>
        </authorList>
    </citation>
    <scope>ACETYLATION [LARGE SCALE ANALYSIS] AT MET-1</scope>
    <scope>IDENTIFICATION BY MASS SPECTROMETRY [LARGE SCALE ANALYSIS]</scope>
</reference>
<reference key="11">
    <citation type="journal article" date="2015" name="Cell Rep.">
        <title>An organellar nalpha-acetyltransferase, naa60, acetylates cytosolic N termini of transmembrane proteins and maintains Golgi integrity.</title>
        <authorList>
            <person name="Aksnes H."/>
            <person name="Van Damme P."/>
            <person name="Goris M."/>
            <person name="Starheim K.K."/>
            <person name="Marie M."/>
            <person name="Stoeve S.I."/>
            <person name="Hoel C."/>
            <person name="Kalvik T.V."/>
            <person name="Hole K."/>
            <person name="Glomnes N."/>
            <person name="Furnes C."/>
            <person name="Ljostveit S."/>
            <person name="Ziegler M."/>
            <person name="Niere M."/>
            <person name="Gevaert K."/>
            <person name="Arnesen T."/>
        </authorList>
    </citation>
    <scope>ACETYLATION AT MET-1</scope>
</reference>
<protein>
    <recommendedName>
        <fullName evidence="16">Acyl-CoA (8-3)-desaturase</fullName>
        <ecNumber evidence="6 7">1.14.19.44</ecNumber>
    </recommendedName>
    <alternativeName>
        <fullName>Delta(5) fatty acid desaturase</fullName>
        <shortName evidence="2">D5D</shortName>
        <shortName evidence="2">Delta(5) desaturase</shortName>
        <shortName evidence="12 13">Delta-5 desaturase</shortName>
    </alternativeName>
    <alternativeName>
        <fullName evidence="14">Fatty acid desaturase 1</fullName>
    </alternativeName>
</protein>